<evidence type="ECO:0000250" key="1"/>
<evidence type="ECO:0000305" key="2"/>
<comment type="function">
    <text evidence="1">Involved in late/very late gene activation.</text>
</comment>
<comment type="similarity">
    <text evidence="2">Belongs to the baculoviridae LEF-11 family.</text>
</comment>
<organism>
    <name type="scientific">Orgyia pseudotsugata multicapsid polyhedrosis virus</name>
    <name type="common">OpMNPV</name>
    <dbReference type="NCBI Taxonomy" id="262177"/>
    <lineage>
        <taxon>Viruses</taxon>
        <taxon>Viruses incertae sedis</taxon>
        <taxon>Naldaviricetes</taxon>
        <taxon>Lefavirales</taxon>
        <taxon>Baculoviridae</taxon>
        <taxon>Alphabaculovirus</taxon>
        <taxon>Alphabaculovirus orpseudotsugatae</taxon>
    </lineage>
</organism>
<gene>
    <name type="primary">LEF-11</name>
    <name type="ORF">ORF23</name>
</gene>
<protein>
    <recommendedName>
        <fullName>Late expression factor 11</fullName>
    </recommendedName>
</protein>
<reference key="1">
    <citation type="journal article" date="1993" name="J. Gen. Virol.">
        <title>Nucleotide sequence of the ubiquitin-39K gene region from the Orgyia pseudotsugata multinucleocapsid nuclear polyhedrosis virus genome.</title>
        <authorList>
            <person name="Russell R.L.Q."/>
            <person name="Rohrmann G.F."/>
        </authorList>
    </citation>
    <scope>NUCLEOTIDE SEQUENCE [GENOMIC DNA]</scope>
</reference>
<reference key="2">
    <citation type="journal article" date="1997" name="Virology">
        <title>The sequence of the Orgyia pseudotsugata multinucleocapsid nuclear polyhedrosis virus genome.</title>
        <authorList>
            <person name="Ahrens C.H."/>
            <person name="Russell R.R."/>
            <person name="Funk C.J."/>
            <person name="Evans J."/>
            <person name="Harwood S."/>
            <person name="Rohrmann G.F."/>
        </authorList>
    </citation>
    <scope>NUCLEOTIDE SEQUENCE [LARGE SCALE GENOMIC DNA]</scope>
</reference>
<proteinExistence type="inferred from homology"/>
<name>LEF11_NPVOP</name>
<organismHost>
    <name type="scientific">Orgyia pseudotsugata</name>
    <name type="common">Douglas-fir tussock moth</name>
    <dbReference type="NCBI Taxonomy" id="33414"/>
</organismHost>
<keyword id="KW-1185">Reference proteome</keyword>
<keyword id="KW-0804">Transcription</keyword>
<keyword id="KW-0805">Transcription regulation</keyword>
<feature type="chain" id="PRO_0000132840" description="Late expression factor 11">
    <location>
        <begin position="1"/>
        <end position="125"/>
    </location>
</feature>
<sequence>MPWRAQDHSVDCLTRSEVYALWAEAVNTLKRNLQVKNVSAHLLEDDAADVKDYIRANLSRFTVITGKCSRRTVCHHHRRVQRTLEPRQDLVNEYACSVTDVYRSPKWSICPTTCTRSRSPTTTPR</sequence>
<accession>Q05124</accession>
<dbReference type="EMBL" id="D13375">
    <property type="protein sequence ID" value="BAA02637.1"/>
    <property type="molecule type" value="Genomic_DNA"/>
</dbReference>
<dbReference type="EMBL" id="U75930">
    <property type="protein sequence ID" value="AAC59022.1"/>
    <property type="molecule type" value="Genomic_DNA"/>
</dbReference>
<dbReference type="PIR" id="JQ2027">
    <property type="entry name" value="JQ2027"/>
</dbReference>
<dbReference type="RefSeq" id="NP_046179.1">
    <property type="nucleotide sequence ID" value="NC_001875.2"/>
</dbReference>
<dbReference type="KEGG" id="vg:912006"/>
<dbReference type="OrthoDB" id="15391at10239"/>
<dbReference type="Proteomes" id="UP000009248">
    <property type="component" value="Genome"/>
</dbReference>
<dbReference type="GO" id="GO:0006355">
    <property type="term" value="P:regulation of DNA-templated transcription"/>
    <property type="evidence" value="ECO:0007669"/>
    <property type="project" value="InterPro"/>
</dbReference>
<dbReference type="GO" id="GO:0019058">
    <property type="term" value="P:viral life cycle"/>
    <property type="evidence" value="ECO:0007669"/>
    <property type="project" value="InterPro"/>
</dbReference>
<dbReference type="InterPro" id="IPR009429">
    <property type="entry name" value="Baculo_LEF-11"/>
</dbReference>
<dbReference type="Pfam" id="PF06385">
    <property type="entry name" value="Baculo_LEF-11"/>
    <property type="match status" value="1"/>
</dbReference>